<organism>
    <name type="scientific">Staphylococcus aureus (strain Mu50 / ATCC 700699)</name>
    <dbReference type="NCBI Taxonomy" id="158878"/>
    <lineage>
        <taxon>Bacteria</taxon>
        <taxon>Bacillati</taxon>
        <taxon>Bacillota</taxon>
        <taxon>Bacilli</taxon>
        <taxon>Bacillales</taxon>
        <taxon>Staphylococcaceae</taxon>
        <taxon>Staphylococcus</taxon>
    </lineage>
</organism>
<comment type="function">
    <text evidence="1">Involved in the gluconeogenesis. Catalyzes the conversion of oxaloacetate (OAA) to phosphoenolpyruvate (PEP) through direct phosphoryl transfer between the nucleoside triphosphate and OAA.</text>
</comment>
<comment type="catalytic activity">
    <reaction evidence="1">
        <text>oxaloacetate + ATP = phosphoenolpyruvate + ADP + CO2</text>
        <dbReference type="Rhea" id="RHEA:18617"/>
        <dbReference type="ChEBI" id="CHEBI:16452"/>
        <dbReference type="ChEBI" id="CHEBI:16526"/>
        <dbReference type="ChEBI" id="CHEBI:30616"/>
        <dbReference type="ChEBI" id="CHEBI:58702"/>
        <dbReference type="ChEBI" id="CHEBI:456216"/>
        <dbReference type="EC" id="4.1.1.49"/>
    </reaction>
</comment>
<comment type="cofactor">
    <cofactor evidence="1">
        <name>Mn(2+)</name>
        <dbReference type="ChEBI" id="CHEBI:29035"/>
    </cofactor>
    <text evidence="1">Binds 1 Mn(2+) ion per subunit.</text>
</comment>
<comment type="pathway">
    <text evidence="1">Carbohydrate biosynthesis; gluconeogenesis.</text>
</comment>
<comment type="subcellular location">
    <subcellularLocation>
        <location evidence="1">Cytoplasm</location>
    </subcellularLocation>
</comment>
<comment type="similarity">
    <text evidence="1">Belongs to the phosphoenolpyruvate carboxykinase (ATP) family.</text>
</comment>
<proteinExistence type="inferred from homology"/>
<accession>P0A0B3</accession>
<accession>P51065</accession>
<reference key="1">
    <citation type="journal article" date="2001" name="Lancet">
        <title>Whole genome sequencing of meticillin-resistant Staphylococcus aureus.</title>
        <authorList>
            <person name="Kuroda M."/>
            <person name="Ohta T."/>
            <person name="Uchiyama I."/>
            <person name="Baba T."/>
            <person name="Yuzawa H."/>
            <person name="Kobayashi I."/>
            <person name="Cui L."/>
            <person name="Oguchi A."/>
            <person name="Aoki K."/>
            <person name="Nagai Y."/>
            <person name="Lian J.-Q."/>
            <person name="Ito T."/>
            <person name="Kanamori M."/>
            <person name="Matsumaru H."/>
            <person name="Maruyama A."/>
            <person name="Murakami H."/>
            <person name="Hosoyama A."/>
            <person name="Mizutani-Ui Y."/>
            <person name="Takahashi N.K."/>
            <person name="Sawano T."/>
            <person name="Inoue R."/>
            <person name="Kaito C."/>
            <person name="Sekimizu K."/>
            <person name="Hirakawa H."/>
            <person name="Kuhara S."/>
            <person name="Goto S."/>
            <person name="Yabuzaki J."/>
            <person name="Kanehisa M."/>
            <person name="Yamashita A."/>
            <person name="Oshima K."/>
            <person name="Furuya K."/>
            <person name="Yoshino C."/>
            <person name="Shiba T."/>
            <person name="Hattori M."/>
            <person name="Ogasawara N."/>
            <person name="Hayashi H."/>
            <person name="Hiramatsu K."/>
        </authorList>
    </citation>
    <scope>NUCLEOTIDE SEQUENCE [LARGE SCALE GENOMIC DNA]</scope>
    <source>
        <strain>Mu50 / ATCC 700699</strain>
    </source>
</reference>
<evidence type="ECO:0000255" key="1">
    <source>
        <dbReference type="HAMAP-Rule" id="MF_00453"/>
    </source>
</evidence>
<feature type="chain" id="PRO_0000203844" description="Phosphoenolpyruvate carboxykinase (ATP)">
    <location>
        <begin position="1"/>
        <end position="530"/>
    </location>
</feature>
<feature type="binding site" evidence="1">
    <location>
        <position position="58"/>
    </location>
    <ligand>
        <name>substrate</name>
    </ligand>
</feature>
<feature type="binding site" evidence="1">
    <location>
        <position position="195"/>
    </location>
    <ligand>
        <name>substrate</name>
    </ligand>
</feature>
<feature type="binding site" evidence="1">
    <location>
        <position position="201"/>
    </location>
    <ligand>
        <name>ATP</name>
        <dbReference type="ChEBI" id="CHEBI:30616"/>
    </ligand>
</feature>
<feature type="binding site" evidence="1">
    <location>
        <position position="201"/>
    </location>
    <ligand>
        <name>Mn(2+)</name>
        <dbReference type="ChEBI" id="CHEBI:29035"/>
    </ligand>
</feature>
<feature type="binding site" evidence="1">
    <location>
        <position position="201"/>
    </location>
    <ligand>
        <name>substrate</name>
    </ligand>
</feature>
<feature type="binding site" evidence="1">
    <location>
        <position position="220"/>
    </location>
    <ligand>
        <name>ATP</name>
        <dbReference type="ChEBI" id="CHEBI:30616"/>
    </ligand>
</feature>
<feature type="binding site" evidence="1">
    <location>
        <position position="220"/>
    </location>
    <ligand>
        <name>Mn(2+)</name>
        <dbReference type="ChEBI" id="CHEBI:29035"/>
    </ligand>
</feature>
<feature type="binding site" evidence="1">
    <location>
        <begin position="236"/>
        <end position="244"/>
    </location>
    <ligand>
        <name>ATP</name>
        <dbReference type="ChEBI" id="CHEBI:30616"/>
    </ligand>
</feature>
<feature type="binding site" evidence="1">
    <location>
        <position position="257"/>
    </location>
    <ligand>
        <name>Mn(2+)</name>
        <dbReference type="ChEBI" id="CHEBI:29035"/>
    </ligand>
</feature>
<feature type="binding site" evidence="1">
    <location>
        <position position="285"/>
    </location>
    <ligand>
        <name>ATP</name>
        <dbReference type="ChEBI" id="CHEBI:30616"/>
    </ligand>
</feature>
<feature type="binding site" evidence="1">
    <location>
        <position position="321"/>
    </location>
    <ligand>
        <name>ATP</name>
        <dbReference type="ChEBI" id="CHEBI:30616"/>
    </ligand>
</feature>
<feature type="binding site" evidence="1">
    <location>
        <position position="321"/>
    </location>
    <ligand>
        <name>substrate</name>
    </ligand>
</feature>
<feature type="binding site" evidence="1">
    <location>
        <begin position="440"/>
        <end position="441"/>
    </location>
    <ligand>
        <name>ATP</name>
        <dbReference type="ChEBI" id="CHEBI:30616"/>
    </ligand>
</feature>
<feature type="binding site" evidence="1">
    <location>
        <position position="446"/>
    </location>
    <ligand>
        <name>ATP</name>
        <dbReference type="ChEBI" id="CHEBI:30616"/>
    </ligand>
</feature>
<dbReference type="EC" id="4.1.1.49" evidence="1"/>
<dbReference type="EMBL" id="BA000017">
    <property type="protein sequence ID" value="BAB57953.1"/>
    <property type="molecule type" value="Genomic_DNA"/>
</dbReference>
<dbReference type="RefSeq" id="WP_000109906.1">
    <property type="nucleotide sequence ID" value="NC_002758.2"/>
</dbReference>
<dbReference type="SMR" id="P0A0B3"/>
<dbReference type="KEGG" id="sav:SAV1791"/>
<dbReference type="HOGENOM" id="CLU_018247_0_1_9"/>
<dbReference type="PhylomeDB" id="P0A0B3"/>
<dbReference type="UniPathway" id="UPA00138"/>
<dbReference type="Proteomes" id="UP000002481">
    <property type="component" value="Chromosome"/>
</dbReference>
<dbReference type="GO" id="GO:0005829">
    <property type="term" value="C:cytosol"/>
    <property type="evidence" value="ECO:0007669"/>
    <property type="project" value="TreeGrafter"/>
</dbReference>
<dbReference type="GO" id="GO:0005524">
    <property type="term" value="F:ATP binding"/>
    <property type="evidence" value="ECO:0007669"/>
    <property type="project" value="UniProtKB-UniRule"/>
</dbReference>
<dbReference type="GO" id="GO:0046872">
    <property type="term" value="F:metal ion binding"/>
    <property type="evidence" value="ECO:0007669"/>
    <property type="project" value="UniProtKB-KW"/>
</dbReference>
<dbReference type="GO" id="GO:0004612">
    <property type="term" value="F:phosphoenolpyruvate carboxykinase (ATP) activity"/>
    <property type="evidence" value="ECO:0007669"/>
    <property type="project" value="UniProtKB-UniRule"/>
</dbReference>
<dbReference type="GO" id="GO:0006094">
    <property type="term" value="P:gluconeogenesis"/>
    <property type="evidence" value="ECO:0007669"/>
    <property type="project" value="UniProtKB-UniRule"/>
</dbReference>
<dbReference type="CDD" id="cd00484">
    <property type="entry name" value="PEPCK_ATP"/>
    <property type="match status" value="1"/>
</dbReference>
<dbReference type="FunFam" id="2.170.8.10:FF:000001">
    <property type="entry name" value="Phosphoenolpyruvate carboxykinase (ATP)"/>
    <property type="match status" value="1"/>
</dbReference>
<dbReference type="FunFam" id="3.40.449.10:FF:000001">
    <property type="entry name" value="Phosphoenolpyruvate carboxykinase (ATP)"/>
    <property type="match status" value="1"/>
</dbReference>
<dbReference type="Gene3D" id="3.90.228.20">
    <property type="match status" value="1"/>
</dbReference>
<dbReference type="Gene3D" id="3.40.449.10">
    <property type="entry name" value="Phosphoenolpyruvate Carboxykinase, domain 1"/>
    <property type="match status" value="1"/>
</dbReference>
<dbReference type="Gene3D" id="2.170.8.10">
    <property type="entry name" value="Phosphoenolpyruvate Carboxykinase, domain 2"/>
    <property type="match status" value="1"/>
</dbReference>
<dbReference type="HAMAP" id="MF_00453">
    <property type="entry name" value="PEPCK_ATP"/>
    <property type="match status" value="1"/>
</dbReference>
<dbReference type="InterPro" id="IPR001272">
    <property type="entry name" value="PEP_carboxykinase_ATP"/>
</dbReference>
<dbReference type="InterPro" id="IPR013035">
    <property type="entry name" value="PEP_carboxykinase_C"/>
</dbReference>
<dbReference type="InterPro" id="IPR008210">
    <property type="entry name" value="PEP_carboxykinase_N"/>
</dbReference>
<dbReference type="InterPro" id="IPR015994">
    <property type="entry name" value="PEPCK_ATP_CS"/>
</dbReference>
<dbReference type="NCBIfam" id="TIGR00224">
    <property type="entry name" value="pckA"/>
    <property type="match status" value="1"/>
</dbReference>
<dbReference type="NCBIfam" id="NF006820">
    <property type="entry name" value="PRK09344.1-2"/>
    <property type="match status" value="1"/>
</dbReference>
<dbReference type="NCBIfam" id="NF006821">
    <property type="entry name" value="PRK09344.1-3"/>
    <property type="match status" value="1"/>
</dbReference>
<dbReference type="PANTHER" id="PTHR30031:SF0">
    <property type="entry name" value="PHOSPHOENOLPYRUVATE CARBOXYKINASE (ATP)"/>
    <property type="match status" value="1"/>
</dbReference>
<dbReference type="PANTHER" id="PTHR30031">
    <property type="entry name" value="PHOSPHOENOLPYRUVATE CARBOXYKINASE ATP"/>
    <property type="match status" value="1"/>
</dbReference>
<dbReference type="Pfam" id="PF01293">
    <property type="entry name" value="PEPCK_ATP"/>
    <property type="match status" value="1"/>
</dbReference>
<dbReference type="PIRSF" id="PIRSF006294">
    <property type="entry name" value="PEP_crbxkin"/>
    <property type="match status" value="1"/>
</dbReference>
<dbReference type="SUPFAM" id="SSF68923">
    <property type="entry name" value="PEP carboxykinase N-terminal domain"/>
    <property type="match status" value="1"/>
</dbReference>
<dbReference type="SUPFAM" id="SSF53795">
    <property type="entry name" value="PEP carboxykinase-like"/>
    <property type="match status" value="1"/>
</dbReference>
<dbReference type="PROSITE" id="PS00532">
    <property type="entry name" value="PEPCK_ATP"/>
    <property type="match status" value="1"/>
</dbReference>
<name>PCKA_STAAM</name>
<gene>
    <name evidence="1" type="primary">pckA</name>
    <name type="ordered locus">SAV1791</name>
</gene>
<keyword id="KW-0067">ATP-binding</keyword>
<keyword id="KW-0963">Cytoplasm</keyword>
<keyword id="KW-0210">Decarboxylase</keyword>
<keyword id="KW-0312">Gluconeogenesis</keyword>
<keyword id="KW-0456">Lyase</keyword>
<keyword id="KW-0464">Manganese</keyword>
<keyword id="KW-0479">Metal-binding</keyword>
<keyword id="KW-0547">Nucleotide-binding</keyword>
<sequence length="530" mass="59377">MSVDTYTETTKIDKLLKKPTSHFQLSTTQLYNKILDNNEGVLTELGAVNASTGKYTGRSPKDKFFVSEPSYRDNIDWGEINQPIDEETFLKLYHKVLDYLDKKDELYVFKGYAGSDKDTMLKLTVINELAWHNLFAKNMFIRPESKEEATKIKPNFTIVSAPHFKADPEVDGTKSETFVIISFKHKVILIGGTEYAGEMKKGIFSVMNYLLPMQDIMSMHCSANVGEKGDVALFFGLSGTGKTTLSADPHRKLIGDDEHGWNKNGVFNIEGGCYAKAINLSKEKEPQIFDAIKYGAILENTVVAEDGSVDFEDNRYTENTRAAYPINHIDNIVVPSKAAHPNTIIFLTADAFGVIPPISKLNKDQAMYHFLSGFTSKLAGTERGVTEPEPSFSTCFGAPFFPLHPTVYADLLGELIDLHDVDVYLVNTGWTGGKYGVGRRISLHYTRQMVNQAISGKLKNAEYTKDSTFGLSIPVEIEDVPKTILNPINAWSDKEKYKAQAEDLIQRFEKNFEKFGEKVEHIAEKGSFNK</sequence>
<protein>
    <recommendedName>
        <fullName evidence="1">Phosphoenolpyruvate carboxykinase (ATP)</fullName>
        <shortName evidence="1">PCK</shortName>
        <shortName evidence="1">PEP carboxykinase</shortName>
        <shortName evidence="1">PEPCK</shortName>
        <ecNumber evidence="1">4.1.1.49</ecNumber>
    </recommendedName>
</protein>